<comment type="function">
    <text evidence="2">With S4 and S5 plays an important role in translational accuracy.</text>
</comment>
<comment type="function">
    <text evidence="2">Interacts with and stabilizes bases of the 16S rRNA that are involved in tRNA selection in the A site and with the mRNA backbone. Located at the interface of the 30S and 50S subunits, it traverses the body of the 30S subunit contacting proteins on the other side and probably holding the rRNA structure together. The combined cluster of proteins S8, S12 and S17 appears to hold together the shoulder and platform of the 30S subunit.</text>
</comment>
<comment type="subunit">
    <text evidence="2">Part of the 30S ribosomal subunit. Contacts proteins S8 and S17. May interact with IF1 in the 30S initiation complex.</text>
</comment>
<comment type="similarity">
    <text evidence="2">Belongs to the universal ribosomal protein uS12 family.</text>
</comment>
<sequence length="124" mass="13737">MATVNQLVRKPRARKVAKSNVPALEACPQKRGVCTRVYTTTPKKPNSALRKVCRVRLTNGFEVTSYIGGEGHNLQEHSVILIRGGRVKDLPGVRYHTVRGALDCSGVKDRKQARSKYGVKRPKA</sequence>
<keyword id="KW-0007">Acetylation</keyword>
<keyword id="KW-0488">Methylation</keyword>
<keyword id="KW-0687">Ribonucleoprotein</keyword>
<keyword id="KW-0689">Ribosomal protein</keyword>
<keyword id="KW-0694">RNA-binding</keyword>
<keyword id="KW-0699">rRNA-binding</keyword>
<keyword id="KW-0820">tRNA-binding</keyword>
<feature type="chain" id="PRO_1000194168" description="Small ribosomal subunit protein uS12">
    <location>
        <begin position="1"/>
        <end position="124"/>
    </location>
</feature>
<feature type="modified residue" description="3-methylthioaspartic acid" evidence="1">
    <location>
        <position position="89"/>
    </location>
</feature>
<feature type="modified residue" description="N6-acetyllysine" evidence="2">
    <location>
        <position position="108"/>
    </location>
</feature>
<evidence type="ECO:0000250" key="1"/>
<evidence type="ECO:0000255" key="2">
    <source>
        <dbReference type="HAMAP-Rule" id="MF_00403"/>
    </source>
</evidence>
<evidence type="ECO:0000305" key="3"/>
<organism>
    <name type="scientific">Escherichia fergusonii (strain ATCC 35469 / DSM 13698 / CCUG 18766 / IAM 14443 / JCM 21226 / LMG 7866 / NBRC 102419 / NCTC 12128 / CDC 0568-73)</name>
    <dbReference type="NCBI Taxonomy" id="585054"/>
    <lineage>
        <taxon>Bacteria</taxon>
        <taxon>Pseudomonadati</taxon>
        <taxon>Pseudomonadota</taxon>
        <taxon>Gammaproteobacteria</taxon>
        <taxon>Enterobacterales</taxon>
        <taxon>Enterobacteriaceae</taxon>
        <taxon>Escherichia</taxon>
    </lineage>
</organism>
<gene>
    <name evidence="2" type="primary">rpsL</name>
    <name type="ordered locus">EFER_3312</name>
</gene>
<protein>
    <recommendedName>
        <fullName evidence="2">Small ribosomal subunit protein uS12</fullName>
    </recommendedName>
    <alternativeName>
        <fullName evidence="3">30S ribosomal protein S12</fullName>
    </alternativeName>
</protein>
<accession>B7LS48</accession>
<proteinExistence type="inferred from homology"/>
<dbReference type="EMBL" id="CU928158">
    <property type="protein sequence ID" value="CAQ90791.1"/>
    <property type="molecule type" value="Genomic_DNA"/>
</dbReference>
<dbReference type="RefSeq" id="WP_000246815.1">
    <property type="nucleotide sequence ID" value="NC_011740.1"/>
</dbReference>
<dbReference type="SMR" id="B7LS48"/>
<dbReference type="GeneID" id="98390450"/>
<dbReference type="KEGG" id="efe:EFER_3312"/>
<dbReference type="HOGENOM" id="CLU_104295_1_2_6"/>
<dbReference type="OrthoDB" id="9802366at2"/>
<dbReference type="Proteomes" id="UP000000745">
    <property type="component" value="Chromosome"/>
</dbReference>
<dbReference type="GO" id="GO:0015935">
    <property type="term" value="C:small ribosomal subunit"/>
    <property type="evidence" value="ECO:0007669"/>
    <property type="project" value="InterPro"/>
</dbReference>
<dbReference type="GO" id="GO:0019843">
    <property type="term" value="F:rRNA binding"/>
    <property type="evidence" value="ECO:0007669"/>
    <property type="project" value="UniProtKB-UniRule"/>
</dbReference>
<dbReference type="GO" id="GO:0003735">
    <property type="term" value="F:structural constituent of ribosome"/>
    <property type="evidence" value="ECO:0007669"/>
    <property type="project" value="InterPro"/>
</dbReference>
<dbReference type="GO" id="GO:0000049">
    <property type="term" value="F:tRNA binding"/>
    <property type="evidence" value="ECO:0007669"/>
    <property type="project" value="UniProtKB-UniRule"/>
</dbReference>
<dbReference type="GO" id="GO:0006412">
    <property type="term" value="P:translation"/>
    <property type="evidence" value="ECO:0007669"/>
    <property type="project" value="UniProtKB-UniRule"/>
</dbReference>
<dbReference type="CDD" id="cd03368">
    <property type="entry name" value="Ribosomal_S12"/>
    <property type="match status" value="1"/>
</dbReference>
<dbReference type="FunFam" id="2.40.50.140:FF:000001">
    <property type="entry name" value="30S ribosomal protein S12"/>
    <property type="match status" value="1"/>
</dbReference>
<dbReference type="Gene3D" id="2.40.50.140">
    <property type="entry name" value="Nucleic acid-binding proteins"/>
    <property type="match status" value="1"/>
</dbReference>
<dbReference type="HAMAP" id="MF_00403_B">
    <property type="entry name" value="Ribosomal_uS12_B"/>
    <property type="match status" value="1"/>
</dbReference>
<dbReference type="InterPro" id="IPR012340">
    <property type="entry name" value="NA-bd_OB-fold"/>
</dbReference>
<dbReference type="InterPro" id="IPR006032">
    <property type="entry name" value="Ribosomal_uS12"/>
</dbReference>
<dbReference type="InterPro" id="IPR005679">
    <property type="entry name" value="Ribosomal_uS12_bac"/>
</dbReference>
<dbReference type="NCBIfam" id="TIGR00981">
    <property type="entry name" value="rpsL_bact"/>
    <property type="match status" value="1"/>
</dbReference>
<dbReference type="PANTHER" id="PTHR11652">
    <property type="entry name" value="30S RIBOSOMAL PROTEIN S12 FAMILY MEMBER"/>
    <property type="match status" value="1"/>
</dbReference>
<dbReference type="Pfam" id="PF00164">
    <property type="entry name" value="Ribosom_S12_S23"/>
    <property type="match status" value="1"/>
</dbReference>
<dbReference type="PIRSF" id="PIRSF002133">
    <property type="entry name" value="Ribosomal_S12/S23"/>
    <property type="match status" value="1"/>
</dbReference>
<dbReference type="PRINTS" id="PR01034">
    <property type="entry name" value="RIBOSOMALS12"/>
</dbReference>
<dbReference type="SUPFAM" id="SSF50249">
    <property type="entry name" value="Nucleic acid-binding proteins"/>
    <property type="match status" value="1"/>
</dbReference>
<dbReference type="PROSITE" id="PS00055">
    <property type="entry name" value="RIBOSOMAL_S12"/>
    <property type="match status" value="1"/>
</dbReference>
<reference key="1">
    <citation type="journal article" date="2009" name="PLoS Genet.">
        <title>Organised genome dynamics in the Escherichia coli species results in highly diverse adaptive paths.</title>
        <authorList>
            <person name="Touchon M."/>
            <person name="Hoede C."/>
            <person name="Tenaillon O."/>
            <person name="Barbe V."/>
            <person name="Baeriswyl S."/>
            <person name="Bidet P."/>
            <person name="Bingen E."/>
            <person name="Bonacorsi S."/>
            <person name="Bouchier C."/>
            <person name="Bouvet O."/>
            <person name="Calteau A."/>
            <person name="Chiapello H."/>
            <person name="Clermont O."/>
            <person name="Cruveiller S."/>
            <person name="Danchin A."/>
            <person name="Diard M."/>
            <person name="Dossat C."/>
            <person name="Karoui M.E."/>
            <person name="Frapy E."/>
            <person name="Garry L."/>
            <person name="Ghigo J.M."/>
            <person name="Gilles A.M."/>
            <person name="Johnson J."/>
            <person name="Le Bouguenec C."/>
            <person name="Lescat M."/>
            <person name="Mangenot S."/>
            <person name="Martinez-Jehanne V."/>
            <person name="Matic I."/>
            <person name="Nassif X."/>
            <person name="Oztas S."/>
            <person name="Petit M.A."/>
            <person name="Pichon C."/>
            <person name="Rouy Z."/>
            <person name="Ruf C.S."/>
            <person name="Schneider D."/>
            <person name="Tourret J."/>
            <person name="Vacherie B."/>
            <person name="Vallenet D."/>
            <person name="Medigue C."/>
            <person name="Rocha E.P.C."/>
            <person name="Denamur E."/>
        </authorList>
    </citation>
    <scope>NUCLEOTIDE SEQUENCE [LARGE SCALE GENOMIC DNA]</scope>
    <source>
        <strain>ATCC 35469 / DSM 13698 / BCRC 15582 / CCUG 18766 / IAM 14443 / JCM 21226 / LMG 7866 / NBRC 102419 / NCTC 12128 / CDC 0568-73</strain>
    </source>
</reference>
<name>RS12_ESCF3</name>